<keyword id="KW-0687">Ribonucleoprotein</keyword>
<keyword id="KW-0689">Ribosomal protein</keyword>
<keyword id="KW-0694">RNA-binding</keyword>
<keyword id="KW-0699">rRNA-binding</keyword>
<protein>
    <recommendedName>
        <fullName evidence="1">Large ribosomal subunit protein uL2</fullName>
    </recommendedName>
    <alternativeName>
        <fullName evidence="3">50S ribosomal protein L2</fullName>
    </alternativeName>
</protein>
<name>RL2_STRM5</name>
<sequence>MPLMKFKPTSPGRRSAVRVVTPDLHKGAPHAALVESQSRSGGRNHHGRITVRHVGGGAKQHYRIIDFKRNKLGIPARVERIEYDPNRTAHIALLCYVDGERRYIIAPKGLKAGDQVIAGSDAPIKAGNTLPLRNIPVGTTIHCIELKPGKGAQIARAAGAAVQLVAREGIYATLRLRSGEMRKVPVECCATIGEVGNDEHSLEKLGKAGAKRWRGVRPTVRGAAMNPVDHPHGGGEAKAGQGNPHPVTPWGVPTKGYKTRHNKRTQQFIVRDRRG</sequence>
<evidence type="ECO:0000255" key="1">
    <source>
        <dbReference type="HAMAP-Rule" id="MF_01320"/>
    </source>
</evidence>
<evidence type="ECO:0000256" key="2">
    <source>
        <dbReference type="SAM" id="MobiDB-lite"/>
    </source>
</evidence>
<evidence type="ECO:0000305" key="3"/>
<proteinExistence type="inferred from homology"/>
<accession>B4SKW6</accession>
<organism>
    <name type="scientific">Stenotrophomonas maltophilia (strain R551-3)</name>
    <dbReference type="NCBI Taxonomy" id="391008"/>
    <lineage>
        <taxon>Bacteria</taxon>
        <taxon>Pseudomonadati</taxon>
        <taxon>Pseudomonadota</taxon>
        <taxon>Gammaproteobacteria</taxon>
        <taxon>Lysobacterales</taxon>
        <taxon>Lysobacteraceae</taxon>
        <taxon>Stenotrophomonas</taxon>
        <taxon>Stenotrophomonas maltophilia group</taxon>
    </lineage>
</organism>
<feature type="chain" id="PRO_1000141619" description="Large ribosomal subunit protein uL2">
    <location>
        <begin position="1"/>
        <end position="275"/>
    </location>
</feature>
<feature type="region of interest" description="Disordered" evidence="2">
    <location>
        <begin position="28"/>
        <end position="49"/>
    </location>
</feature>
<feature type="region of interest" description="Disordered" evidence="2">
    <location>
        <begin position="224"/>
        <end position="246"/>
    </location>
</feature>
<reference key="1">
    <citation type="submission" date="2008-06" db="EMBL/GenBank/DDBJ databases">
        <title>Complete sequence of Stenotrophomonas maltophilia R551-3.</title>
        <authorList>
            <consortium name="US DOE Joint Genome Institute"/>
            <person name="Lucas S."/>
            <person name="Copeland A."/>
            <person name="Lapidus A."/>
            <person name="Glavina del Rio T."/>
            <person name="Dalin E."/>
            <person name="Tice H."/>
            <person name="Pitluck S."/>
            <person name="Chain P."/>
            <person name="Malfatti S."/>
            <person name="Shin M."/>
            <person name="Vergez L."/>
            <person name="Lang D."/>
            <person name="Schmutz J."/>
            <person name="Larimer F."/>
            <person name="Land M."/>
            <person name="Hauser L."/>
            <person name="Kyrpides N."/>
            <person name="Mikhailova N."/>
            <person name="Taghavi S."/>
            <person name="Monchy S."/>
            <person name="Newman L."/>
            <person name="Vangronsveld J."/>
            <person name="van der Lelie D."/>
            <person name="Richardson P."/>
        </authorList>
    </citation>
    <scope>NUCLEOTIDE SEQUENCE [LARGE SCALE GENOMIC DNA]</scope>
    <source>
        <strain>R551-3</strain>
    </source>
</reference>
<comment type="function">
    <text evidence="1">One of the primary rRNA binding proteins. Required for association of the 30S and 50S subunits to form the 70S ribosome, for tRNA binding and peptide bond formation. It has been suggested to have peptidyltransferase activity; this is somewhat controversial. Makes several contacts with the 16S rRNA in the 70S ribosome.</text>
</comment>
<comment type="subunit">
    <text evidence="1">Part of the 50S ribosomal subunit. Forms a bridge to the 30S subunit in the 70S ribosome.</text>
</comment>
<comment type="similarity">
    <text evidence="1">Belongs to the universal ribosomal protein uL2 family.</text>
</comment>
<gene>
    <name evidence="1" type="primary">rplB</name>
    <name type="ordered locus">Smal_0759</name>
</gene>
<dbReference type="EMBL" id="CP001111">
    <property type="protein sequence ID" value="ACF50464.1"/>
    <property type="molecule type" value="Genomic_DNA"/>
</dbReference>
<dbReference type="RefSeq" id="WP_004145339.1">
    <property type="nucleotide sequence ID" value="NC_011071.1"/>
</dbReference>
<dbReference type="SMR" id="B4SKW6"/>
<dbReference type="STRING" id="391008.Smal_0759"/>
<dbReference type="GeneID" id="97259937"/>
<dbReference type="KEGG" id="smt:Smal_0759"/>
<dbReference type="eggNOG" id="COG0090">
    <property type="taxonomic scope" value="Bacteria"/>
</dbReference>
<dbReference type="HOGENOM" id="CLU_036235_2_1_6"/>
<dbReference type="OrthoDB" id="9778722at2"/>
<dbReference type="Proteomes" id="UP000001867">
    <property type="component" value="Chromosome"/>
</dbReference>
<dbReference type="GO" id="GO:0015934">
    <property type="term" value="C:large ribosomal subunit"/>
    <property type="evidence" value="ECO:0007669"/>
    <property type="project" value="InterPro"/>
</dbReference>
<dbReference type="GO" id="GO:0019843">
    <property type="term" value="F:rRNA binding"/>
    <property type="evidence" value="ECO:0007669"/>
    <property type="project" value="UniProtKB-UniRule"/>
</dbReference>
<dbReference type="GO" id="GO:0003735">
    <property type="term" value="F:structural constituent of ribosome"/>
    <property type="evidence" value="ECO:0007669"/>
    <property type="project" value="InterPro"/>
</dbReference>
<dbReference type="GO" id="GO:0016740">
    <property type="term" value="F:transferase activity"/>
    <property type="evidence" value="ECO:0007669"/>
    <property type="project" value="InterPro"/>
</dbReference>
<dbReference type="GO" id="GO:0002181">
    <property type="term" value="P:cytoplasmic translation"/>
    <property type="evidence" value="ECO:0007669"/>
    <property type="project" value="TreeGrafter"/>
</dbReference>
<dbReference type="FunFam" id="2.30.30.30:FF:000001">
    <property type="entry name" value="50S ribosomal protein L2"/>
    <property type="match status" value="1"/>
</dbReference>
<dbReference type="FunFam" id="2.40.50.140:FF:000003">
    <property type="entry name" value="50S ribosomal protein L2"/>
    <property type="match status" value="1"/>
</dbReference>
<dbReference type="FunFam" id="4.10.950.10:FF:000001">
    <property type="entry name" value="50S ribosomal protein L2"/>
    <property type="match status" value="1"/>
</dbReference>
<dbReference type="Gene3D" id="2.30.30.30">
    <property type="match status" value="1"/>
</dbReference>
<dbReference type="Gene3D" id="2.40.50.140">
    <property type="entry name" value="Nucleic acid-binding proteins"/>
    <property type="match status" value="1"/>
</dbReference>
<dbReference type="Gene3D" id="4.10.950.10">
    <property type="entry name" value="Ribosomal protein L2, domain 3"/>
    <property type="match status" value="1"/>
</dbReference>
<dbReference type="HAMAP" id="MF_01320_B">
    <property type="entry name" value="Ribosomal_uL2_B"/>
    <property type="match status" value="1"/>
</dbReference>
<dbReference type="InterPro" id="IPR012340">
    <property type="entry name" value="NA-bd_OB-fold"/>
</dbReference>
<dbReference type="InterPro" id="IPR014722">
    <property type="entry name" value="Rib_uL2_dom2"/>
</dbReference>
<dbReference type="InterPro" id="IPR002171">
    <property type="entry name" value="Ribosomal_uL2"/>
</dbReference>
<dbReference type="InterPro" id="IPR005880">
    <property type="entry name" value="Ribosomal_uL2_bac/org-type"/>
</dbReference>
<dbReference type="InterPro" id="IPR022669">
    <property type="entry name" value="Ribosomal_uL2_C"/>
</dbReference>
<dbReference type="InterPro" id="IPR022671">
    <property type="entry name" value="Ribosomal_uL2_CS"/>
</dbReference>
<dbReference type="InterPro" id="IPR014726">
    <property type="entry name" value="Ribosomal_uL2_dom3"/>
</dbReference>
<dbReference type="InterPro" id="IPR022666">
    <property type="entry name" value="Ribosomal_uL2_RNA-bd_dom"/>
</dbReference>
<dbReference type="InterPro" id="IPR008991">
    <property type="entry name" value="Translation_prot_SH3-like_sf"/>
</dbReference>
<dbReference type="NCBIfam" id="TIGR01171">
    <property type="entry name" value="rplB_bact"/>
    <property type="match status" value="1"/>
</dbReference>
<dbReference type="PANTHER" id="PTHR13691:SF5">
    <property type="entry name" value="LARGE RIBOSOMAL SUBUNIT PROTEIN UL2M"/>
    <property type="match status" value="1"/>
</dbReference>
<dbReference type="PANTHER" id="PTHR13691">
    <property type="entry name" value="RIBOSOMAL PROTEIN L2"/>
    <property type="match status" value="1"/>
</dbReference>
<dbReference type="Pfam" id="PF00181">
    <property type="entry name" value="Ribosomal_L2"/>
    <property type="match status" value="1"/>
</dbReference>
<dbReference type="Pfam" id="PF03947">
    <property type="entry name" value="Ribosomal_L2_C"/>
    <property type="match status" value="1"/>
</dbReference>
<dbReference type="PIRSF" id="PIRSF002158">
    <property type="entry name" value="Ribosomal_L2"/>
    <property type="match status" value="1"/>
</dbReference>
<dbReference type="SMART" id="SM01383">
    <property type="entry name" value="Ribosomal_L2"/>
    <property type="match status" value="1"/>
</dbReference>
<dbReference type="SMART" id="SM01382">
    <property type="entry name" value="Ribosomal_L2_C"/>
    <property type="match status" value="1"/>
</dbReference>
<dbReference type="SUPFAM" id="SSF50249">
    <property type="entry name" value="Nucleic acid-binding proteins"/>
    <property type="match status" value="1"/>
</dbReference>
<dbReference type="SUPFAM" id="SSF50104">
    <property type="entry name" value="Translation proteins SH3-like domain"/>
    <property type="match status" value="1"/>
</dbReference>
<dbReference type="PROSITE" id="PS00467">
    <property type="entry name" value="RIBOSOMAL_L2"/>
    <property type="match status" value="1"/>
</dbReference>